<gene>
    <name evidence="1" type="primary">uvrB</name>
    <name type="ordered locus">STH151</name>
</gene>
<feature type="chain" id="PRO_0000227373" description="UvrABC system protein B">
    <location>
        <begin position="1"/>
        <end position="659"/>
    </location>
</feature>
<feature type="domain" description="Helicase ATP-binding" evidence="1">
    <location>
        <begin position="25"/>
        <end position="414"/>
    </location>
</feature>
<feature type="domain" description="Helicase C-terminal" evidence="1">
    <location>
        <begin position="431"/>
        <end position="597"/>
    </location>
</feature>
<feature type="domain" description="UVR" evidence="1">
    <location>
        <begin position="620"/>
        <end position="655"/>
    </location>
</feature>
<feature type="short sequence motif" description="Beta-hairpin">
    <location>
        <begin position="91"/>
        <end position="114"/>
    </location>
</feature>
<feature type="binding site" evidence="1">
    <location>
        <begin position="38"/>
        <end position="45"/>
    </location>
    <ligand>
        <name>ATP</name>
        <dbReference type="ChEBI" id="CHEBI:30616"/>
    </ligand>
</feature>
<sequence length="659" mass="75407">MKPFKVVAPFEPTGDQPQAIERLSEGVRRGAREQILLGATGTGKTFTIAKVIEQVQKPTLVLAHNKILAAQLCSEFQQFFPENAVEYFVSYYDYYQPEAYIPTTDTYIEKDALINDEIDKLRHSATMALFERRDVIIVASVSCIYGLGSPEDYRDLAVSLRVGNQVDRDYILRRLVDIQYERNDHNFVRNKFRVRGDVVEIFPAGATDRAIRCEWWGDEIERISEFDPLTGEITGTMTHVAIYPASHYVVADEKREQALRSIEEELEERLKELRAQGKLLEAQRLEQRTRNDLEMIREIGFCSGIENYSRHLTGRKPGEPPYTLLDFFPDDWLLVIDESHVTIPQVAAMYNGDRSRKETLIEYGFRLPSAADNRPLKFAEFEERINQVIYVSATPGPYELERVPPSLVVEQIVRPTGLLDPEVEVRPTKGQIDDLYAEIRARVKKNQRVLVTTLTKRMAEDLTEYLKELGVKVRYMHSDVETIERMQIVRDLRLGVFDVLVGINLLREGLDIPEVSLVAILDADKEGFLRAERSLIQTIGRAARNAEGKVIMYADRITQSMQKAINETNRRRAIQEAYNRKHGIVPKTIVKPVRDVIQAVKPVAEAGPANILDTPPHEIPKVVAKLRKEMMQAAKDLDFERAAEIRDIIFELEKKKRGA</sequence>
<comment type="function">
    <text evidence="1">The UvrABC repair system catalyzes the recognition and processing of DNA lesions. A damage recognition complex composed of 2 UvrA and 2 UvrB subunits scans DNA for abnormalities. Upon binding of the UvrA(2)B(2) complex to a putative damaged site, the DNA wraps around one UvrB monomer. DNA wrap is dependent on ATP binding by UvrB and probably causes local melting of the DNA helix, facilitating insertion of UvrB beta-hairpin between the DNA strands. Then UvrB probes one DNA strand for the presence of a lesion. If a lesion is found the UvrA subunits dissociate and the UvrB-DNA preincision complex is formed. This complex is subsequently bound by UvrC and the second UvrB is released. If no lesion is found, the DNA wraps around the other UvrB subunit that will check the other stand for damage.</text>
</comment>
<comment type="subunit">
    <text evidence="1">Forms a heterotetramer with UvrA during the search for lesions. Interacts with UvrC in an incision complex.</text>
</comment>
<comment type="subcellular location">
    <subcellularLocation>
        <location evidence="1">Cytoplasm</location>
    </subcellularLocation>
</comment>
<comment type="domain">
    <text evidence="1">The beta-hairpin motif is involved in DNA binding.</text>
</comment>
<comment type="similarity">
    <text evidence="1">Belongs to the UvrB family.</text>
</comment>
<organism>
    <name type="scientific">Symbiobacterium thermophilum (strain DSM 24528 / JCM 14929 / IAM 14863 / T)</name>
    <dbReference type="NCBI Taxonomy" id="292459"/>
    <lineage>
        <taxon>Bacteria</taxon>
        <taxon>Bacillati</taxon>
        <taxon>Bacillota</taxon>
        <taxon>Clostridia</taxon>
        <taxon>Eubacteriales</taxon>
        <taxon>Symbiobacteriaceae</taxon>
        <taxon>Symbiobacterium</taxon>
    </lineage>
</organism>
<proteinExistence type="inferred from homology"/>
<evidence type="ECO:0000255" key="1">
    <source>
        <dbReference type="HAMAP-Rule" id="MF_00204"/>
    </source>
</evidence>
<keyword id="KW-0067">ATP-binding</keyword>
<keyword id="KW-0963">Cytoplasm</keyword>
<keyword id="KW-0227">DNA damage</keyword>
<keyword id="KW-0228">DNA excision</keyword>
<keyword id="KW-0234">DNA repair</keyword>
<keyword id="KW-0267">Excision nuclease</keyword>
<keyword id="KW-0547">Nucleotide-binding</keyword>
<keyword id="KW-1185">Reference proteome</keyword>
<keyword id="KW-0742">SOS response</keyword>
<dbReference type="EMBL" id="AP006840">
    <property type="protein sequence ID" value="BAD39136.1"/>
    <property type="molecule type" value="Genomic_DNA"/>
</dbReference>
<dbReference type="RefSeq" id="WP_011194286.1">
    <property type="nucleotide sequence ID" value="NC_006177.1"/>
</dbReference>
<dbReference type="SMR" id="Q67T57"/>
<dbReference type="STRING" id="292459.STH151"/>
<dbReference type="KEGG" id="sth:STH151"/>
<dbReference type="eggNOG" id="COG0556">
    <property type="taxonomic scope" value="Bacteria"/>
</dbReference>
<dbReference type="HOGENOM" id="CLU_009621_2_1_9"/>
<dbReference type="OrthoDB" id="9806651at2"/>
<dbReference type="Proteomes" id="UP000000417">
    <property type="component" value="Chromosome"/>
</dbReference>
<dbReference type="GO" id="GO:0005737">
    <property type="term" value="C:cytoplasm"/>
    <property type="evidence" value="ECO:0007669"/>
    <property type="project" value="UniProtKB-SubCell"/>
</dbReference>
<dbReference type="GO" id="GO:0009380">
    <property type="term" value="C:excinuclease repair complex"/>
    <property type="evidence" value="ECO:0007669"/>
    <property type="project" value="InterPro"/>
</dbReference>
<dbReference type="GO" id="GO:0005524">
    <property type="term" value="F:ATP binding"/>
    <property type="evidence" value="ECO:0007669"/>
    <property type="project" value="UniProtKB-UniRule"/>
</dbReference>
<dbReference type="GO" id="GO:0016887">
    <property type="term" value="F:ATP hydrolysis activity"/>
    <property type="evidence" value="ECO:0007669"/>
    <property type="project" value="InterPro"/>
</dbReference>
<dbReference type="GO" id="GO:0003677">
    <property type="term" value="F:DNA binding"/>
    <property type="evidence" value="ECO:0007669"/>
    <property type="project" value="UniProtKB-UniRule"/>
</dbReference>
<dbReference type="GO" id="GO:0009381">
    <property type="term" value="F:excinuclease ABC activity"/>
    <property type="evidence" value="ECO:0007669"/>
    <property type="project" value="UniProtKB-UniRule"/>
</dbReference>
<dbReference type="GO" id="GO:0006289">
    <property type="term" value="P:nucleotide-excision repair"/>
    <property type="evidence" value="ECO:0007669"/>
    <property type="project" value="UniProtKB-UniRule"/>
</dbReference>
<dbReference type="GO" id="GO:0009432">
    <property type="term" value="P:SOS response"/>
    <property type="evidence" value="ECO:0007669"/>
    <property type="project" value="UniProtKB-UniRule"/>
</dbReference>
<dbReference type="CDD" id="cd17916">
    <property type="entry name" value="DEXHc_UvrB"/>
    <property type="match status" value="1"/>
</dbReference>
<dbReference type="CDD" id="cd18790">
    <property type="entry name" value="SF2_C_UvrB"/>
    <property type="match status" value="1"/>
</dbReference>
<dbReference type="Gene3D" id="3.40.50.300">
    <property type="entry name" value="P-loop containing nucleotide triphosphate hydrolases"/>
    <property type="match status" value="3"/>
</dbReference>
<dbReference type="Gene3D" id="4.10.860.10">
    <property type="entry name" value="UVR domain"/>
    <property type="match status" value="1"/>
</dbReference>
<dbReference type="HAMAP" id="MF_00204">
    <property type="entry name" value="UvrB"/>
    <property type="match status" value="1"/>
</dbReference>
<dbReference type="InterPro" id="IPR006935">
    <property type="entry name" value="Helicase/UvrB_N"/>
</dbReference>
<dbReference type="InterPro" id="IPR014001">
    <property type="entry name" value="Helicase_ATP-bd"/>
</dbReference>
<dbReference type="InterPro" id="IPR001650">
    <property type="entry name" value="Helicase_C-like"/>
</dbReference>
<dbReference type="InterPro" id="IPR027417">
    <property type="entry name" value="P-loop_NTPase"/>
</dbReference>
<dbReference type="InterPro" id="IPR001943">
    <property type="entry name" value="UVR_dom"/>
</dbReference>
<dbReference type="InterPro" id="IPR036876">
    <property type="entry name" value="UVR_dom_sf"/>
</dbReference>
<dbReference type="InterPro" id="IPR004807">
    <property type="entry name" value="UvrB"/>
</dbReference>
<dbReference type="InterPro" id="IPR041471">
    <property type="entry name" value="UvrB_inter"/>
</dbReference>
<dbReference type="InterPro" id="IPR024759">
    <property type="entry name" value="UvrB_YAD/RRR_dom"/>
</dbReference>
<dbReference type="NCBIfam" id="NF003673">
    <property type="entry name" value="PRK05298.1"/>
    <property type="match status" value="1"/>
</dbReference>
<dbReference type="NCBIfam" id="TIGR00631">
    <property type="entry name" value="uvrb"/>
    <property type="match status" value="1"/>
</dbReference>
<dbReference type="PANTHER" id="PTHR24029">
    <property type="entry name" value="UVRABC SYSTEM PROTEIN B"/>
    <property type="match status" value="1"/>
</dbReference>
<dbReference type="PANTHER" id="PTHR24029:SF0">
    <property type="entry name" value="UVRABC SYSTEM PROTEIN B"/>
    <property type="match status" value="1"/>
</dbReference>
<dbReference type="Pfam" id="PF00271">
    <property type="entry name" value="Helicase_C"/>
    <property type="match status" value="1"/>
</dbReference>
<dbReference type="Pfam" id="PF04851">
    <property type="entry name" value="ResIII"/>
    <property type="match status" value="1"/>
</dbReference>
<dbReference type="Pfam" id="PF02151">
    <property type="entry name" value="UVR"/>
    <property type="match status" value="1"/>
</dbReference>
<dbReference type="Pfam" id="PF12344">
    <property type="entry name" value="UvrB"/>
    <property type="match status" value="1"/>
</dbReference>
<dbReference type="Pfam" id="PF17757">
    <property type="entry name" value="UvrB_inter"/>
    <property type="match status" value="1"/>
</dbReference>
<dbReference type="SMART" id="SM00487">
    <property type="entry name" value="DEXDc"/>
    <property type="match status" value="1"/>
</dbReference>
<dbReference type="SMART" id="SM00490">
    <property type="entry name" value="HELICc"/>
    <property type="match status" value="1"/>
</dbReference>
<dbReference type="SUPFAM" id="SSF46600">
    <property type="entry name" value="C-terminal UvrC-binding domain of UvrB"/>
    <property type="match status" value="1"/>
</dbReference>
<dbReference type="SUPFAM" id="SSF52540">
    <property type="entry name" value="P-loop containing nucleoside triphosphate hydrolases"/>
    <property type="match status" value="2"/>
</dbReference>
<dbReference type="PROSITE" id="PS51192">
    <property type="entry name" value="HELICASE_ATP_BIND_1"/>
    <property type="match status" value="1"/>
</dbReference>
<dbReference type="PROSITE" id="PS51194">
    <property type="entry name" value="HELICASE_CTER"/>
    <property type="match status" value="1"/>
</dbReference>
<dbReference type="PROSITE" id="PS50151">
    <property type="entry name" value="UVR"/>
    <property type="match status" value="1"/>
</dbReference>
<protein>
    <recommendedName>
        <fullName evidence="1">UvrABC system protein B</fullName>
        <shortName evidence="1">Protein UvrB</shortName>
    </recommendedName>
    <alternativeName>
        <fullName evidence="1">Excinuclease ABC subunit B</fullName>
    </alternativeName>
</protein>
<name>UVRB_SYMTH</name>
<accession>Q67T57</accession>
<reference key="1">
    <citation type="journal article" date="2004" name="Nucleic Acids Res.">
        <title>Genome sequence of Symbiobacterium thermophilum, an uncultivable bacterium that depends on microbial commensalism.</title>
        <authorList>
            <person name="Ueda K."/>
            <person name="Yamashita A."/>
            <person name="Ishikawa J."/>
            <person name="Shimada M."/>
            <person name="Watsuji T."/>
            <person name="Morimura K."/>
            <person name="Ikeda H."/>
            <person name="Hattori M."/>
            <person name="Beppu T."/>
        </authorList>
    </citation>
    <scope>NUCLEOTIDE SEQUENCE [LARGE SCALE GENOMIC DNA]</scope>
    <source>
        <strain>DSM 24528 / JCM 14929 / IAM 14863 / T</strain>
    </source>
</reference>